<organism>
    <name type="scientific">Arabidopsis thaliana</name>
    <name type="common">Mouse-ear cress</name>
    <dbReference type="NCBI Taxonomy" id="3702"/>
    <lineage>
        <taxon>Eukaryota</taxon>
        <taxon>Viridiplantae</taxon>
        <taxon>Streptophyta</taxon>
        <taxon>Embryophyta</taxon>
        <taxon>Tracheophyta</taxon>
        <taxon>Spermatophyta</taxon>
        <taxon>Magnoliopsida</taxon>
        <taxon>eudicotyledons</taxon>
        <taxon>Gunneridae</taxon>
        <taxon>Pentapetalae</taxon>
        <taxon>rosids</taxon>
        <taxon>malvids</taxon>
        <taxon>Brassicales</taxon>
        <taxon>Brassicaceae</taxon>
        <taxon>Camelineae</taxon>
        <taxon>Arabidopsis</taxon>
    </lineage>
</organism>
<comment type="function">
    <text evidence="1">Calcium-binding protein that interacts with newly synthesized monoglucosylated glycoproteins in the endoplasmic reticulum. It may act in assisting protein assembly and/or in the retention within the ER of unassembled protein subunits. It seems to play a major role in the quality control apparatus of the ER by the retention of incorrectly folded proteins (By similarity).</text>
</comment>
<comment type="subcellular location">
    <subcellularLocation>
        <location evidence="1">Endoplasmic reticulum membrane</location>
        <topology evidence="1">Single-pass type I membrane protein</topology>
    </subcellularLocation>
</comment>
<comment type="similarity">
    <text evidence="5">Belongs to the calreticulin family.</text>
</comment>
<proteinExistence type="evidence at protein level"/>
<protein>
    <recommendedName>
        <fullName>Calnexin homolog 1</fullName>
    </recommendedName>
</protein>
<sequence length="530" mass="60486">MRQRQLFSVFLLLLAFVSFQKLCYCDDQTVLYESFDEPFDGRWIVSKNSDYEGVWKHAKSEGHEDYGLLVSEKARKYGIVKELDEPLNLKEGTVVLQYEVRFQEGLECGGAYLKYLRPQEAGWTPQGFDSESPYSIMFGPDKCGGTNKVHFILKHKNPKSGEYVEHHLKFPPSVPYDKLSHVYTAILKPDNEVRILVDGEEKKKANLLSGEDFEPALIPAKTIPDPEDKKPEDWDERAKIPDPNAVKPEDWDEDAPMEIEDEEAEKPEGWLDDEPEEVDDPEATKPEDWDDEEDGMWEAPKIDNPKCEAAPGCGEWKRPMKRNPAYKGKWSSPLIDNPAYKGIWKPRDIPNPDYFELDRPDYEPIAAIGIEIWTMQDGILFDNILIAKDEKVAETYRQTTWKPKFDVEKEKQKAEEEAAGSADGLKSYQKVVFDLLNKVADLSFLSAYKSKITELIEKAEQQPNLTIGVLVAIVVVFFSLFLKLIFGGKKAAAPVEKKKPEVAESSKSGDEAEKKEETAAPRKRQPRRDN</sequence>
<dbReference type="EMBL" id="Z18242">
    <property type="protein sequence ID" value="CAA79144.1"/>
    <property type="molecule type" value="mRNA"/>
</dbReference>
<dbReference type="EMBL" id="AB010069">
    <property type="protein sequence ID" value="BAB10079.1"/>
    <property type="molecule type" value="Genomic_DNA"/>
</dbReference>
<dbReference type="EMBL" id="CP002688">
    <property type="protein sequence ID" value="AED97518.1"/>
    <property type="molecule type" value="Genomic_DNA"/>
</dbReference>
<dbReference type="EMBL" id="AY059880">
    <property type="protein sequence ID" value="AAL24362.1"/>
    <property type="molecule type" value="mRNA"/>
</dbReference>
<dbReference type="EMBL" id="AY114669">
    <property type="protein sequence ID" value="AAM47988.1"/>
    <property type="molecule type" value="mRNA"/>
</dbReference>
<dbReference type="EMBL" id="AY086864">
    <property type="protein sequence ID" value="AAM63911.1"/>
    <property type="molecule type" value="mRNA"/>
</dbReference>
<dbReference type="PIR" id="JN0597">
    <property type="entry name" value="JN0597"/>
</dbReference>
<dbReference type="RefSeq" id="NP_200987.1">
    <property type="nucleotide sequence ID" value="NM_125573.4"/>
</dbReference>
<dbReference type="SMR" id="P29402"/>
<dbReference type="BioGRID" id="21545">
    <property type="interactions" value="26"/>
</dbReference>
<dbReference type="FunCoup" id="P29402">
    <property type="interactions" value="2497"/>
</dbReference>
<dbReference type="STRING" id="3702.P29402"/>
<dbReference type="GlyCosmos" id="P29402">
    <property type="glycosylation" value="1 site, No reported glycans"/>
</dbReference>
<dbReference type="GlyGen" id="P29402">
    <property type="glycosylation" value="1 site"/>
</dbReference>
<dbReference type="iPTMnet" id="P29402"/>
<dbReference type="SwissPalm" id="P29402"/>
<dbReference type="PaxDb" id="3702-AT5G61790.1"/>
<dbReference type="ProteomicsDB" id="239178"/>
<dbReference type="EnsemblPlants" id="AT5G61790.1">
    <property type="protein sequence ID" value="AT5G61790.1"/>
    <property type="gene ID" value="AT5G61790"/>
</dbReference>
<dbReference type="GeneID" id="836301"/>
<dbReference type="Gramene" id="AT5G61790.1">
    <property type="protein sequence ID" value="AT5G61790.1"/>
    <property type="gene ID" value="AT5G61790"/>
</dbReference>
<dbReference type="KEGG" id="ath:AT5G61790"/>
<dbReference type="Araport" id="AT5G61790"/>
<dbReference type="TAIR" id="AT5G61790">
    <property type="gene designation" value="CNX1"/>
</dbReference>
<dbReference type="eggNOG" id="KOG0675">
    <property type="taxonomic scope" value="Eukaryota"/>
</dbReference>
<dbReference type="HOGENOM" id="CLU_018224_1_0_1"/>
<dbReference type="InParanoid" id="P29402"/>
<dbReference type="OMA" id="SGCGKWE"/>
<dbReference type="OrthoDB" id="1938156at2759"/>
<dbReference type="PhylomeDB" id="P29402"/>
<dbReference type="CD-CODE" id="4299E36E">
    <property type="entry name" value="Nucleolus"/>
</dbReference>
<dbReference type="PRO" id="PR:P29402"/>
<dbReference type="Proteomes" id="UP000006548">
    <property type="component" value="Chromosome 5"/>
</dbReference>
<dbReference type="ExpressionAtlas" id="P29402">
    <property type="expression patterns" value="baseline and differential"/>
</dbReference>
<dbReference type="GO" id="GO:0009507">
    <property type="term" value="C:chloroplast"/>
    <property type="evidence" value="ECO:0007005"/>
    <property type="project" value="TAIR"/>
</dbReference>
<dbReference type="GO" id="GO:0005783">
    <property type="term" value="C:endoplasmic reticulum"/>
    <property type="evidence" value="ECO:0007005"/>
    <property type="project" value="TAIR"/>
</dbReference>
<dbReference type="GO" id="GO:0005789">
    <property type="term" value="C:endoplasmic reticulum membrane"/>
    <property type="evidence" value="ECO:0007669"/>
    <property type="project" value="UniProtKB-SubCell"/>
</dbReference>
<dbReference type="GO" id="GO:0005739">
    <property type="term" value="C:mitochondrion"/>
    <property type="evidence" value="ECO:0007005"/>
    <property type="project" value="TAIR"/>
</dbReference>
<dbReference type="GO" id="GO:0009505">
    <property type="term" value="C:plant-type cell wall"/>
    <property type="evidence" value="ECO:0007005"/>
    <property type="project" value="TAIR"/>
</dbReference>
<dbReference type="GO" id="GO:0000325">
    <property type="term" value="C:plant-type vacuole"/>
    <property type="evidence" value="ECO:0007005"/>
    <property type="project" value="TAIR"/>
</dbReference>
<dbReference type="GO" id="GO:0009506">
    <property type="term" value="C:plasmodesma"/>
    <property type="evidence" value="ECO:0007005"/>
    <property type="project" value="TAIR"/>
</dbReference>
<dbReference type="GO" id="GO:0005773">
    <property type="term" value="C:vacuole"/>
    <property type="evidence" value="ECO:0007005"/>
    <property type="project" value="TAIR"/>
</dbReference>
<dbReference type="GO" id="GO:0005509">
    <property type="term" value="F:calcium ion binding"/>
    <property type="evidence" value="ECO:0007669"/>
    <property type="project" value="InterPro"/>
</dbReference>
<dbReference type="GO" id="GO:0030246">
    <property type="term" value="F:carbohydrate binding"/>
    <property type="evidence" value="ECO:0007669"/>
    <property type="project" value="UniProtKB-KW"/>
</dbReference>
<dbReference type="GO" id="GO:0051082">
    <property type="term" value="F:unfolded protein binding"/>
    <property type="evidence" value="ECO:0007669"/>
    <property type="project" value="InterPro"/>
</dbReference>
<dbReference type="GO" id="GO:0006457">
    <property type="term" value="P:protein folding"/>
    <property type="evidence" value="ECO:0007669"/>
    <property type="project" value="InterPro"/>
</dbReference>
<dbReference type="FunFam" id="2.10.250.10:FF:000001">
    <property type="entry name" value="Calnexin homolog"/>
    <property type="match status" value="1"/>
</dbReference>
<dbReference type="FunFam" id="2.60.120.200:FF:000048">
    <property type="entry name" value="Calnexin homolog"/>
    <property type="match status" value="1"/>
</dbReference>
<dbReference type="Gene3D" id="2.60.120.200">
    <property type="match status" value="1"/>
</dbReference>
<dbReference type="Gene3D" id="2.10.250.10">
    <property type="entry name" value="Calreticulin/calnexin, P domain"/>
    <property type="match status" value="1"/>
</dbReference>
<dbReference type="InterPro" id="IPR001580">
    <property type="entry name" value="Calret/calnex"/>
</dbReference>
<dbReference type="InterPro" id="IPR018124">
    <property type="entry name" value="Calret/calnex_CS"/>
</dbReference>
<dbReference type="InterPro" id="IPR009033">
    <property type="entry name" value="Calreticulin/calnexin_P_dom_sf"/>
</dbReference>
<dbReference type="InterPro" id="IPR013320">
    <property type="entry name" value="ConA-like_dom_sf"/>
</dbReference>
<dbReference type="PANTHER" id="PTHR11073:SF1">
    <property type="entry name" value="CALNEXIN 14D-RELATED"/>
    <property type="match status" value="1"/>
</dbReference>
<dbReference type="PANTHER" id="PTHR11073">
    <property type="entry name" value="CALRETICULIN AND CALNEXIN"/>
    <property type="match status" value="1"/>
</dbReference>
<dbReference type="Pfam" id="PF00262">
    <property type="entry name" value="Calreticulin"/>
    <property type="match status" value="1"/>
</dbReference>
<dbReference type="PRINTS" id="PR00626">
    <property type="entry name" value="CALRETICULIN"/>
</dbReference>
<dbReference type="SUPFAM" id="SSF49899">
    <property type="entry name" value="Concanavalin A-like lectins/glucanases"/>
    <property type="match status" value="1"/>
</dbReference>
<dbReference type="SUPFAM" id="SSF63887">
    <property type="entry name" value="P-domain of calnexin/calreticulin"/>
    <property type="match status" value="1"/>
</dbReference>
<dbReference type="PROSITE" id="PS00803">
    <property type="entry name" value="CALRETICULIN_1"/>
    <property type="match status" value="1"/>
</dbReference>
<dbReference type="PROSITE" id="PS00804">
    <property type="entry name" value="CALRETICULIN_2"/>
    <property type="match status" value="1"/>
</dbReference>
<dbReference type="PROSITE" id="PS00805">
    <property type="entry name" value="CALRETICULIN_REPEAT"/>
    <property type="match status" value="3"/>
</dbReference>
<name>CALX1_ARATH</name>
<evidence type="ECO:0000250" key="1"/>
<evidence type="ECO:0000250" key="2">
    <source>
        <dbReference type="UniProtKB" id="P14211"/>
    </source>
</evidence>
<evidence type="ECO:0000255" key="3"/>
<evidence type="ECO:0000256" key="4">
    <source>
        <dbReference type="SAM" id="MobiDB-lite"/>
    </source>
</evidence>
<evidence type="ECO:0000305" key="5"/>
<evidence type="ECO:0007744" key="6">
    <source>
    </source>
</evidence>
<reference key="1">
    <citation type="journal article" date="1993" name="J. Biol. Chem.">
        <title>Primary structure and characterization of an Arabidopsis thaliana calnexin-like protein.</title>
        <authorList>
            <person name="Huang L."/>
            <person name="Franklin A.E."/>
            <person name="Hoffman N.E."/>
        </authorList>
    </citation>
    <scope>NUCLEOTIDE SEQUENCE [MRNA]</scope>
    <source>
        <strain>cv. Columbia</strain>
    </source>
</reference>
<reference key="2">
    <citation type="journal article" date="1998" name="DNA Res.">
        <title>Structural analysis of Arabidopsis thaliana chromosome 5. IV. Sequence features of the regions of 1,456,315 bp covered by nineteen physically assigned P1 and TAC clones.</title>
        <authorList>
            <person name="Sato S."/>
            <person name="Kaneko T."/>
            <person name="Kotani H."/>
            <person name="Nakamura Y."/>
            <person name="Asamizu E."/>
            <person name="Miyajima N."/>
            <person name="Tabata S."/>
        </authorList>
    </citation>
    <scope>NUCLEOTIDE SEQUENCE [LARGE SCALE GENOMIC DNA]</scope>
    <source>
        <strain>cv. Columbia</strain>
    </source>
</reference>
<reference key="3">
    <citation type="journal article" date="2017" name="Plant J.">
        <title>Araport11: a complete reannotation of the Arabidopsis thaliana reference genome.</title>
        <authorList>
            <person name="Cheng C.Y."/>
            <person name="Krishnakumar V."/>
            <person name="Chan A.P."/>
            <person name="Thibaud-Nissen F."/>
            <person name="Schobel S."/>
            <person name="Town C.D."/>
        </authorList>
    </citation>
    <scope>GENOME REANNOTATION</scope>
    <source>
        <strain>cv. Columbia</strain>
    </source>
</reference>
<reference key="4">
    <citation type="journal article" date="2003" name="Science">
        <title>Empirical analysis of transcriptional activity in the Arabidopsis genome.</title>
        <authorList>
            <person name="Yamada K."/>
            <person name="Lim J."/>
            <person name="Dale J.M."/>
            <person name="Chen H."/>
            <person name="Shinn P."/>
            <person name="Palm C.J."/>
            <person name="Southwick A.M."/>
            <person name="Wu H.C."/>
            <person name="Kim C.J."/>
            <person name="Nguyen M."/>
            <person name="Pham P.K."/>
            <person name="Cheuk R.F."/>
            <person name="Karlin-Newmann G."/>
            <person name="Liu S.X."/>
            <person name="Lam B."/>
            <person name="Sakano H."/>
            <person name="Wu T."/>
            <person name="Yu G."/>
            <person name="Miranda M."/>
            <person name="Quach H.L."/>
            <person name="Tripp M."/>
            <person name="Chang C.H."/>
            <person name="Lee J.M."/>
            <person name="Toriumi M.J."/>
            <person name="Chan M.M."/>
            <person name="Tang C.C."/>
            <person name="Onodera C.S."/>
            <person name="Deng J.M."/>
            <person name="Akiyama K."/>
            <person name="Ansari Y."/>
            <person name="Arakawa T."/>
            <person name="Banh J."/>
            <person name="Banno F."/>
            <person name="Bowser L."/>
            <person name="Brooks S.Y."/>
            <person name="Carninci P."/>
            <person name="Chao Q."/>
            <person name="Choy N."/>
            <person name="Enju A."/>
            <person name="Goldsmith A.D."/>
            <person name="Gurjal M."/>
            <person name="Hansen N.F."/>
            <person name="Hayashizaki Y."/>
            <person name="Johnson-Hopson C."/>
            <person name="Hsuan V.W."/>
            <person name="Iida K."/>
            <person name="Karnes M."/>
            <person name="Khan S."/>
            <person name="Koesema E."/>
            <person name="Ishida J."/>
            <person name="Jiang P.X."/>
            <person name="Jones T."/>
            <person name="Kawai J."/>
            <person name="Kamiya A."/>
            <person name="Meyers C."/>
            <person name="Nakajima M."/>
            <person name="Narusaka M."/>
            <person name="Seki M."/>
            <person name="Sakurai T."/>
            <person name="Satou M."/>
            <person name="Tamse R."/>
            <person name="Vaysberg M."/>
            <person name="Wallender E.K."/>
            <person name="Wong C."/>
            <person name="Yamamura Y."/>
            <person name="Yuan S."/>
            <person name="Shinozaki K."/>
            <person name="Davis R.W."/>
            <person name="Theologis A."/>
            <person name="Ecker J.R."/>
        </authorList>
    </citation>
    <scope>NUCLEOTIDE SEQUENCE [LARGE SCALE MRNA]</scope>
    <source>
        <strain>cv. Columbia</strain>
    </source>
</reference>
<reference key="5">
    <citation type="submission" date="2002-03" db="EMBL/GenBank/DDBJ databases">
        <title>Full-length cDNA from Arabidopsis thaliana.</title>
        <authorList>
            <person name="Brover V.V."/>
            <person name="Troukhan M.E."/>
            <person name="Alexandrov N.A."/>
            <person name="Lu Y.-P."/>
            <person name="Flavell R.B."/>
            <person name="Feldmann K.A."/>
        </authorList>
    </citation>
    <scope>NUCLEOTIDE SEQUENCE [LARGE SCALE MRNA]</scope>
</reference>
<reference key="6">
    <citation type="journal article" date="2009" name="Plant Physiol.">
        <title>Large-scale Arabidopsis phosphoproteome profiling reveals novel chloroplast kinase substrates and phosphorylation networks.</title>
        <authorList>
            <person name="Reiland S."/>
            <person name="Messerli G."/>
            <person name="Baerenfaller K."/>
            <person name="Gerrits B."/>
            <person name="Endler A."/>
            <person name="Grossmann J."/>
            <person name="Gruissem W."/>
            <person name="Baginsky S."/>
        </authorList>
    </citation>
    <scope>PHOSPHORYLATION [LARGE SCALE ANALYSIS] AT SER-508</scope>
    <scope>IDENTIFICATION BY MASS SPECTROMETRY [LARGE SCALE ANALYSIS]</scope>
</reference>
<keyword id="KW-0106">Calcium</keyword>
<keyword id="KW-0143">Chaperone</keyword>
<keyword id="KW-1015">Disulfide bond</keyword>
<keyword id="KW-0256">Endoplasmic reticulum</keyword>
<keyword id="KW-0325">Glycoprotein</keyword>
<keyword id="KW-0430">Lectin</keyword>
<keyword id="KW-0472">Membrane</keyword>
<keyword id="KW-0479">Metal-binding</keyword>
<keyword id="KW-0597">Phosphoprotein</keyword>
<keyword id="KW-1185">Reference proteome</keyword>
<keyword id="KW-0677">Repeat</keyword>
<keyword id="KW-0732">Signal</keyword>
<keyword id="KW-0812">Transmembrane</keyword>
<keyword id="KW-1133">Transmembrane helix</keyword>
<feature type="signal peptide" evidence="3">
    <location>
        <begin position="1"/>
        <end position="20"/>
    </location>
</feature>
<feature type="chain" id="PRO_0000004202" description="Calnexin homolog 1">
    <location>
        <begin position="21"/>
        <end position="530"/>
    </location>
</feature>
<feature type="topological domain" description="Lumenal" evidence="3">
    <location>
        <begin position="21"/>
        <end position="466"/>
    </location>
</feature>
<feature type="transmembrane region" description="Helical" evidence="3">
    <location>
        <begin position="467"/>
        <end position="487"/>
    </location>
</feature>
<feature type="topological domain" description="Cytoplasmic" evidence="3">
    <location>
        <begin position="488"/>
        <end position="530"/>
    </location>
</feature>
<feature type="repeat" description="1-1">
    <location>
        <begin position="225"/>
        <end position="236"/>
    </location>
</feature>
<feature type="repeat" description="1-2">
    <location>
        <begin position="242"/>
        <end position="253"/>
    </location>
</feature>
<feature type="repeat" description="1-3">
    <location>
        <begin position="261"/>
        <end position="272"/>
    </location>
</feature>
<feature type="repeat" description="1-4">
    <location>
        <begin position="280"/>
        <end position="291"/>
    </location>
</feature>
<feature type="repeat" description="2-1">
    <location>
        <begin position="295"/>
        <end position="305"/>
    </location>
</feature>
<feature type="repeat" description="2-2">
    <location>
        <begin position="314"/>
        <end position="324"/>
    </location>
</feature>
<feature type="repeat" description="2-3">
    <location>
        <begin position="328"/>
        <end position="338"/>
    </location>
</feature>
<feature type="repeat" description="2-4">
    <location>
        <begin position="342"/>
        <end position="352"/>
    </location>
</feature>
<feature type="region of interest" description="Disordered" evidence="4">
    <location>
        <begin position="216"/>
        <end position="315"/>
    </location>
</feature>
<feature type="region of interest" description="P domain (Extended arm)" evidence="1">
    <location>
        <begin position="223"/>
        <end position="356"/>
    </location>
</feature>
<feature type="region of interest" description="4 X approximate repeats">
    <location>
        <begin position="225"/>
        <end position="291"/>
    </location>
</feature>
<feature type="region of interest" description="4 X approximate repeats">
    <location>
        <begin position="295"/>
        <end position="352"/>
    </location>
</feature>
<feature type="region of interest" description="Disordered" evidence="4">
    <location>
        <begin position="490"/>
        <end position="530"/>
    </location>
</feature>
<feature type="compositionally biased region" description="Basic and acidic residues" evidence="4">
    <location>
        <begin position="224"/>
        <end position="240"/>
    </location>
</feature>
<feature type="compositionally biased region" description="Acidic residues" evidence="4">
    <location>
        <begin position="250"/>
        <end position="281"/>
    </location>
</feature>
<feature type="compositionally biased region" description="Basic and acidic residues" evidence="4">
    <location>
        <begin position="495"/>
        <end position="520"/>
    </location>
</feature>
<feature type="compositionally biased region" description="Basic residues" evidence="4">
    <location>
        <begin position="521"/>
        <end position="530"/>
    </location>
</feature>
<feature type="binding site" evidence="1">
    <location>
        <position position="34"/>
    </location>
    <ligand>
        <name>Ca(2+)</name>
        <dbReference type="ChEBI" id="CHEBI:29108"/>
    </ligand>
</feature>
<feature type="binding site" evidence="1">
    <location>
        <position position="65"/>
    </location>
    <ligand>
        <name>Ca(2+)</name>
        <dbReference type="ChEBI" id="CHEBI:29108"/>
    </ligand>
</feature>
<feature type="binding site" evidence="2">
    <location>
        <position position="112"/>
    </location>
    <ligand>
        <name>an alpha-D-glucoside</name>
        <dbReference type="ChEBI" id="CHEBI:22390"/>
    </ligand>
</feature>
<feature type="binding site" evidence="2">
    <location>
        <position position="114"/>
    </location>
    <ligand>
        <name>an alpha-D-glucoside</name>
        <dbReference type="ChEBI" id="CHEBI:22390"/>
    </ligand>
</feature>
<feature type="binding site" evidence="2">
    <location>
        <position position="134"/>
    </location>
    <ligand>
        <name>an alpha-D-glucoside</name>
        <dbReference type="ChEBI" id="CHEBI:22390"/>
    </ligand>
</feature>
<feature type="binding site" evidence="2">
    <location>
        <position position="141"/>
    </location>
    <ligand>
        <name>an alpha-D-glucoside</name>
        <dbReference type="ChEBI" id="CHEBI:22390"/>
    </ligand>
</feature>
<feature type="binding site" evidence="2">
    <location>
        <position position="371"/>
    </location>
    <ligand>
        <name>an alpha-D-glucoside</name>
        <dbReference type="ChEBI" id="CHEBI:22390"/>
    </ligand>
</feature>
<feature type="binding site" evidence="1">
    <location>
        <position position="382"/>
    </location>
    <ligand>
        <name>Ca(2+)</name>
        <dbReference type="ChEBI" id="CHEBI:29108"/>
    </ligand>
</feature>
<feature type="modified residue" description="Phosphoserine" evidence="6">
    <location>
        <position position="508"/>
    </location>
</feature>
<feature type="glycosylation site" description="N-linked (GlcNAc...) asparagine" evidence="3">
    <location>
        <position position="464"/>
    </location>
</feature>
<feature type="disulfide bond" evidence="1">
    <location>
        <begin position="108"/>
        <end position="143"/>
    </location>
</feature>
<feature type="disulfide bond" evidence="1">
    <location>
        <begin position="307"/>
        <end position="313"/>
    </location>
</feature>
<accession>P29402</accession>
<gene>
    <name type="primary">CNX1</name>
    <name type="ordered locus">At5g61790</name>
    <name type="ORF">MAC9.11</name>
</gene>